<reference key="1">
    <citation type="journal article" date="2006" name="Mol. Microbiol.">
        <title>Role of pathogenicity island-associated integrases in the genome plasticity of uropathogenic Escherichia coli strain 536.</title>
        <authorList>
            <person name="Hochhut B."/>
            <person name="Wilde C."/>
            <person name="Balling G."/>
            <person name="Middendorf B."/>
            <person name="Dobrindt U."/>
            <person name="Brzuszkiewicz E."/>
            <person name="Gottschalk G."/>
            <person name="Carniel E."/>
            <person name="Hacker J."/>
        </authorList>
    </citation>
    <scope>NUCLEOTIDE SEQUENCE [LARGE SCALE GENOMIC DNA]</scope>
    <source>
        <strain>536 / UPEC</strain>
    </source>
</reference>
<name>PEPE_ECOL5</name>
<keyword id="KW-0963">Cytoplasm</keyword>
<keyword id="KW-0224">Dipeptidase</keyword>
<keyword id="KW-0378">Hydrolase</keyword>
<keyword id="KW-0645">Protease</keyword>
<keyword id="KW-0720">Serine protease</keyword>
<proteinExistence type="inferred from homology"/>
<gene>
    <name evidence="1" type="primary">pepE</name>
    <name type="ordered locus">ECP_4232</name>
</gene>
<comment type="function">
    <text evidence="1">Hydrolyzes dipeptides containing N-terminal aspartate residues. May play a role in allowing the cell to use peptide aspartate to spare carbon otherwise required for the synthesis of the aspartate family of amino acids.</text>
</comment>
<comment type="catalytic activity">
    <reaction evidence="1">
        <text>Dipeptidase E catalyzes the hydrolysis of dipeptides Asp-|-Xaa. It does not act on peptides with N-terminal Glu, Asn or Gln, nor does it cleave isoaspartyl peptides.</text>
        <dbReference type="EC" id="3.4.13.21"/>
    </reaction>
</comment>
<comment type="subcellular location">
    <subcellularLocation>
        <location evidence="1">Cytoplasm</location>
    </subcellularLocation>
</comment>
<comment type="similarity">
    <text evidence="1">Belongs to the peptidase S51 family.</text>
</comment>
<dbReference type="EC" id="3.4.13.21" evidence="1"/>
<dbReference type="EMBL" id="CP000247">
    <property type="protein sequence ID" value="ABG72182.1"/>
    <property type="molecule type" value="Genomic_DNA"/>
</dbReference>
<dbReference type="RefSeq" id="WP_000421769.1">
    <property type="nucleotide sequence ID" value="NC_008253.1"/>
</dbReference>
<dbReference type="SMR" id="Q0TA47"/>
<dbReference type="MEROPS" id="S51.001"/>
<dbReference type="KEGG" id="ecp:ECP_4232"/>
<dbReference type="HOGENOM" id="CLU_071689_0_0_6"/>
<dbReference type="Proteomes" id="UP000009182">
    <property type="component" value="Chromosome"/>
</dbReference>
<dbReference type="GO" id="GO:0005737">
    <property type="term" value="C:cytoplasm"/>
    <property type="evidence" value="ECO:0007669"/>
    <property type="project" value="UniProtKB-SubCell"/>
</dbReference>
<dbReference type="GO" id="GO:0016805">
    <property type="term" value="F:dipeptidase activity"/>
    <property type="evidence" value="ECO:0007669"/>
    <property type="project" value="UniProtKB-UniRule"/>
</dbReference>
<dbReference type="GO" id="GO:0008236">
    <property type="term" value="F:serine-type peptidase activity"/>
    <property type="evidence" value="ECO:0007669"/>
    <property type="project" value="UniProtKB-KW"/>
</dbReference>
<dbReference type="GO" id="GO:0006508">
    <property type="term" value="P:proteolysis"/>
    <property type="evidence" value="ECO:0007669"/>
    <property type="project" value="UniProtKB-UniRule"/>
</dbReference>
<dbReference type="CDD" id="cd03146">
    <property type="entry name" value="GAT1_Peptidase_E"/>
    <property type="match status" value="1"/>
</dbReference>
<dbReference type="FunFam" id="3.40.50.880:FF:000007">
    <property type="entry name" value="Peptidase E"/>
    <property type="match status" value="1"/>
</dbReference>
<dbReference type="Gene3D" id="3.40.50.880">
    <property type="match status" value="1"/>
</dbReference>
<dbReference type="HAMAP" id="MF_00510">
    <property type="entry name" value="Peptidase_E"/>
    <property type="match status" value="1"/>
</dbReference>
<dbReference type="InterPro" id="IPR029062">
    <property type="entry name" value="Class_I_gatase-like"/>
</dbReference>
<dbReference type="InterPro" id="IPR005320">
    <property type="entry name" value="Peptidase_S51"/>
</dbReference>
<dbReference type="InterPro" id="IPR023172">
    <property type="entry name" value="Peptidase_S51_dipeptidase-E"/>
</dbReference>
<dbReference type="NCBIfam" id="NF003642">
    <property type="entry name" value="PRK05282.1"/>
    <property type="match status" value="1"/>
</dbReference>
<dbReference type="PANTHER" id="PTHR20842:SF0">
    <property type="entry name" value="ALPHA-ASPARTYL DIPEPTIDASE"/>
    <property type="match status" value="1"/>
</dbReference>
<dbReference type="PANTHER" id="PTHR20842">
    <property type="entry name" value="PROTEASE S51 ALPHA-ASPARTYL DIPEPTIDASE"/>
    <property type="match status" value="1"/>
</dbReference>
<dbReference type="Pfam" id="PF03575">
    <property type="entry name" value="Peptidase_S51"/>
    <property type="match status" value="1"/>
</dbReference>
<dbReference type="SUPFAM" id="SSF52317">
    <property type="entry name" value="Class I glutamine amidotransferase-like"/>
    <property type="match status" value="1"/>
</dbReference>
<sequence length="229" mass="24560">MELLLLSNSTLPGKAWLEHALPLIAEQLQGRRSAVFIPFAGVTQTWDDYTAKTAAVLASLGVSVTGIHSVVDPVAAIENAEIVIVGGGNTFQLLKQCRERGLLAPITDVVKRGALYIGWSAGANLACPTIRTTNDMPIVDPQGFDALNLFPLQINPHFTNALPEGHKGETREQRIRELLVVAPELTIIGLPEGNWITVSKGHATLGGPNTTYVFKAGEEAVPLEAGHRF</sequence>
<accession>Q0TA47</accession>
<feature type="chain" id="PRO_0000258593" description="Peptidase E">
    <location>
        <begin position="1"/>
        <end position="229"/>
    </location>
</feature>
<feature type="active site" description="Charge relay system" evidence="1">
    <location>
        <position position="120"/>
    </location>
</feature>
<feature type="active site" description="Charge relay system" evidence="1">
    <location>
        <position position="135"/>
    </location>
</feature>
<feature type="active site" description="Charge relay system" evidence="1">
    <location>
        <position position="157"/>
    </location>
</feature>
<organism>
    <name type="scientific">Escherichia coli O6:K15:H31 (strain 536 / UPEC)</name>
    <dbReference type="NCBI Taxonomy" id="362663"/>
    <lineage>
        <taxon>Bacteria</taxon>
        <taxon>Pseudomonadati</taxon>
        <taxon>Pseudomonadota</taxon>
        <taxon>Gammaproteobacteria</taxon>
        <taxon>Enterobacterales</taxon>
        <taxon>Enterobacteriaceae</taxon>
        <taxon>Escherichia</taxon>
    </lineage>
</organism>
<evidence type="ECO:0000255" key="1">
    <source>
        <dbReference type="HAMAP-Rule" id="MF_00510"/>
    </source>
</evidence>
<protein>
    <recommendedName>
        <fullName evidence="1">Peptidase E</fullName>
        <ecNumber evidence="1">3.4.13.21</ecNumber>
    </recommendedName>
    <alternativeName>
        <fullName evidence="1">Alpha-aspartyl dipeptidase</fullName>
    </alternativeName>
    <alternativeName>
        <fullName evidence="1">Asp-specific dipeptidase</fullName>
    </alternativeName>
    <alternativeName>
        <fullName evidence="1">Dipeptidase E</fullName>
    </alternativeName>
</protein>